<reference key="1">
    <citation type="journal article" date="2008" name="DNA Res.">
        <title>Complete genome sequence and comparative analysis of the wild-type commensal Escherichia coli strain SE11 isolated from a healthy adult.</title>
        <authorList>
            <person name="Oshima K."/>
            <person name="Toh H."/>
            <person name="Ogura Y."/>
            <person name="Sasamoto H."/>
            <person name="Morita H."/>
            <person name="Park S.-H."/>
            <person name="Ooka T."/>
            <person name="Iyoda S."/>
            <person name="Taylor T.D."/>
            <person name="Hayashi T."/>
            <person name="Itoh K."/>
            <person name="Hattori M."/>
        </authorList>
    </citation>
    <scope>NUCLEOTIDE SEQUENCE [LARGE SCALE GENOMIC DNA]</scope>
    <source>
        <strain>SE11</strain>
    </source>
</reference>
<comment type="similarity">
    <text evidence="1">Belongs to the UPF0757 family.</text>
</comment>
<proteinExistence type="inferred from homology"/>
<organism>
    <name type="scientific">Escherichia coli (strain SE11)</name>
    <dbReference type="NCBI Taxonomy" id="409438"/>
    <lineage>
        <taxon>Bacteria</taxon>
        <taxon>Pseudomonadati</taxon>
        <taxon>Pseudomonadota</taxon>
        <taxon>Gammaproteobacteria</taxon>
        <taxon>Enterobacterales</taxon>
        <taxon>Enterobacteriaceae</taxon>
        <taxon>Escherichia</taxon>
    </lineage>
</organism>
<feature type="chain" id="PRO_0000388952" description="UPF0757 protein YmgG">
    <location>
        <begin position="1"/>
        <end position="114"/>
    </location>
</feature>
<evidence type="ECO:0000255" key="1">
    <source>
        <dbReference type="HAMAP-Rule" id="MF_01455"/>
    </source>
</evidence>
<dbReference type="EMBL" id="AP009240">
    <property type="protein sequence ID" value="BAG76741.1"/>
    <property type="molecule type" value="Genomic_DNA"/>
</dbReference>
<dbReference type="RefSeq" id="WP_000726974.1">
    <property type="nucleotide sequence ID" value="NC_011415.1"/>
</dbReference>
<dbReference type="KEGG" id="ecy:ECSE_1217"/>
<dbReference type="HOGENOM" id="CLU_164687_0_0_6"/>
<dbReference type="Proteomes" id="UP000008199">
    <property type="component" value="Chromosome"/>
</dbReference>
<dbReference type="HAMAP" id="MF_01455">
    <property type="entry name" value="UPF0757"/>
    <property type="match status" value="1"/>
</dbReference>
<dbReference type="InterPro" id="IPR025693">
    <property type="entry name" value="Gly-zipper_OmpA-like_dom"/>
</dbReference>
<dbReference type="InterPro" id="IPR027367">
    <property type="entry name" value="Gly-zipper_YMGG"/>
</dbReference>
<dbReference type="InterPro" id="IPR022833">
    <property type="entry name" value="UPF0757_YmgG"/>
</dbReference>
<dbReference type="Pfam" id="PF13436">
    <property type="entry name" value="Gly-zipper_OmpA"/>
    <property type="match status" value="1"/>
</dbReference>
<dbReference type="Pfam" id="PF13441">
    <property type="entry name" value="Gly-zipper_YMGG"/>
    <property type="match status" value="1"/>
</dbReference>
<name>YMGG_ECOSE</name>
<sequence>MKKKILAFGLISALFCSTPAMADMNRTTKGALLGAGVGLLTGNGVNGVLKGAAVGAGVGAVTEKGRDGKNARKGAKVGAAVGAVTGVLTGNGLEGAIKGAVIGGTGGAILGKMK</sequence>
<protein>
    <recommendedName>
        <fullName evidence="1">UPF0757 protein YmgG</fullName>
    </recommendedName>
</protein>
<gene>
    <name evidence="1" type="primary">ymgG</name>
    <name type="ordered locus">ECSE_1217</name>
</gene>
<accession>B6I9N0</accession>